<sequence length="108" mass="12569">MLTLYFLQCLQAPYILCTSFITLKIHNFFFFFQFTEIRKGGRGEKQKKKYRETEVEEELGKHSAYDGHLGWSTNNCGSTSNCTIRRSRNSTMVPRQAAQLSSILPKYM</sequence>
<proteinExistence type="uncertain"/>
<protein>
    <recommendedName>
        <fullName>Putative uncharacterized protein YLR140W</fullName>
    </recommendedName>
</protein>
<comment type="subcellular location">
    <subcellularLocation>
        <location evidence="2">Membrane</location>
        <topology evidence="2">Single-pass membrane protein</topology>
    </subcellularLocation>
</comment>
<comment type="miscellaneous">
    <text evidence="2">Partially overlaps RRN5.</text>
</comment>
<comment type="caution">
    <text evidence="3">Product of a dubious gene prediction unlikely to encode a functional protein. Because of that it is not part of the S.cerevisiae S288c complete/reference proteome set.</text>
</comment>
<evidence type="ECO:0000255" key="1"/>
<evidence type="ECO:0000305" key="2"/>
<evidence type="ECO:0000305" key="3">
    <source>
    </source>
</evidence>
<feature type="chain" id="PRO_0000299617" description="Putative uncharacterized protein YLR140W">
    <location>
        <begin position="1"/>
        <end position="108"/>
    </location>
</feature>
<feature type="transmembrane region" description="Helical" evidence="1">
    <location>
        <begin position="10"/>
        <end position="32"/>
    </location>
</feature>
<reference key="1">
    <citation type="journal article" date="1997" name="Nature">
        <title>The nucleotide sequence of Saccharomyces cerevisiae chromosome XII.</title>
        <authorList>
            <person name="Johnston M."/>
            <person name="Hillier L.W."/>
            <person name="Riles L."/>
            <person name="Albermann K."/>
            <person name="Andre B."/>
            <person name="Ansorge W."/>
            <person name="Benes V."/>
            <person name="Brueckner M."/>
            <person name="Delius H."/>
            <person name="Dubois E."/>
            <person name="Duesterhoeft A."/>
            <person name="Entian K.-D."/>
            <person name="Floeth M."/>
            <person name="Goffeau A."/>
            <person name="Hebling U."/>
            <person name="Heumann K."/>
            <person name="Heuss-Neitzel D."/>
            <person name="Hilbert H."/>
            <person name="Hilger F."/>
            <person name="Kleine K."/>
            <person name="Koetter P."/>
            <person name="Louis E.J."/>
            <person name="Messenguy F."/>
            <person name="Mewes H.-W."/>
            <person name="Miosga T."/>
            <person name="Moestl D."/>
            <person name="Mueller-Auer S."/>
            <person name="Nentwich U."/>
            <person name="Obermaier B."/>
            <person name="Piravandi E."/>
            <person name="Pohl T.M."/>
            <person name="Portetelle D."/>
            <person name="Purnelle B."/>
            <person name="Rechmann S."/>
            <person name="Rieger M."/>
            <person name="Rinke M."/>
            <person name="Rose M."/>
            <person name="Scharfe M."/>
            <person name="Scherens B."/>
            <person name="Scholler P."/>
            <person name="Schwager C."/>
            <person name="Schwarz S."/>
            <person name="Underwood A.P."/>
            <person name="Urrestarazu L.A."/>
            <person name="Vandenbol M."/>
            <person name="Verhasselt P."/>
            <person name="Vierendeels F."/>
            <person name="Voet M."/>
            <person name="Volckaert G."/>
            <person name="Voss H."/>
            <person name="Wambutt R."/>
            <person name="Wedler E."/>
            <person name="Wedler H."/>
            <person name="Zimmermann F.K."/>
            <person name="Zollner A."/>
            <person name="Hani J."/>
            <person name="Hoheisel J.D."/>
        </authorList>
    </citation>
    <scope>NUCLEOTIDE SEQUENCE [LARGE SCALE GENOMIC DNA]</scope>
    <source>
        <strain>ATCC 204508 / S288c</strain>
    </source>
</reference>
<reference key="2">
    <citation type="journal article" date="2014" name="G3 (Bethesda)">
        <title>The reference genome sequence of Saccharomyces cerevisiae: Then and now.</title>
        <authorList>
            <person name="Engel S.R."/>
            <person name="Dietrich F.S."/>
            <person name="Fisk D.G."/>
            <person name="Binkley G."/>
            <person name="Balakrishnan R."/>
            <person name="Costanzo M.C."/>
            <person name="Dwight S.S."/>
            <person name="Hitz B.C."/>
            <person name="Karra K."/>
            <person name="Nash R.S."/>
            <person name="Weng S."/>
            <person name="Wong E.D."/>
            <person name="Lloyd P."/>
            <person name="Skrzypek M.S."/>
            <person name="Miyasato S.R."/>
            <person name="Simison M."/>
            <person name="Cherry J.M."/>
        </authorList>
    </citation>
    <scope>GENOME REANNOTATION</scope>
    <source>
        <strain>ATCC 204508 / S288c</strain>
    </source>
</reference>
<name>YL140_YEAST</name>
<organism>
    <name type="scientific">Saccharomyces cerevisiae (strain ATCC 204508 / S288c)</name>
    <name type="common">Baker's yeast</name>
    <dbReference type="NCBI Taxonomy" id="559292"/>
    <lineage>
        <taxon>Eukaryota</taxon>
        <taxon>Fungi</taxon>
        <taxon>Dikarya</taxon>
        <taxon>Ascomycota</taxon>
        <taxon>Saccharomycotina</taxon>
        <taxon>Saccharomycetes</taxon>
        <taxon>Saccharomycetales</taxon>
        <taxon>Saccharomycetaceae</taxon>
        <taxon>Saccharomyces</taxon>
    </lineage>
</organism>
<dbReference type="EMBL" id="U53881">
    <property type="protein sequence ID" value="AAB82403.1"/>
    <property type="molecule type" value="Genomic_DNA"/>
</dbReference>
<dbReference type="EMBL" id="X91258">
    <property type="protein sequence ID" value="CAA62659.1"/>
    <property type="molecule type" value="Genomic_DNA"/>
</dbReference>
<dbReference type="EMBL" id="Z73312">
    <property type="protein sequence ID" value="CAA97712.1"/>
    <property type="molecule type" value="Genomic_DNA"/>
</dbReference>
<dbReference type="PIR" id="S59336">
    <property type="entry name" value="S59336"/>
</dbReference>
<dbReference type="DIP" id="DIP-4814N"/>
<dbReference type="PaxDb" id="4932-YLR140W"/>
<dbReference type="EnsemblFungi" id="YLR140W_mRNA">
    <property type="protein sequence ID" value="YLR140W"/>
    <property type="gene ID" value="YLR140W"/>
</dbReference>
<dbReference type="AGR" id="SGD:S000004130"/>
<dbReference type="SGD" id="S000004130">
    <property type="gene designation" value="YLR140W"/>
</dbReference>
<dbReference type="HOGENOM" id="CLU_2212011_0_0_1"/>
<dbReference type="GO" id="GO:0016020">
    <property type="term" value="C:membrane"/>
    <property type="evidence" value="ECO:0007669"/>
    <property type="project" value="UniProtKB-SubCell"/>
</dbReference>
<accession>Q12077</accession>
<keyword id="KW-0472">Membrane</keyword>
<keyword id="KW-0812">Transmembrane</keyword>
<keyword id="KW-1133">Transmembrane helix</keyword>
<gene>
    <name type="ordered locus">YLR140W</name>
    <name type="ORF">L3162</name>
</gene>